<organism>
    <name type="scientific">Helicobacter pylori (strain ATCC 700392 / 26695)</name>
    <name type="common">Campylobacter pylori</name>
    <dbReference type="NCBI Taxonomy" id="85962"/>
    <lineage>
        <taxon>Bacteria</taxon>
        <taxon>Pseudomonadati</taxon>
        <taxon>Campylobacterota</taxon>
        <taxon>Epsilonproteobacteria</taxon>
        <taxon>Campylobacterales</taxon>
        <taxon>Helicobacteraceae</taxon>
        <taxon>Helicobacter</taxon>
    </lineage>
</organism>
<name>ISPE_HELPY</name>
<comment type="function">
    <text evidence="1">Catalyzes the phosphorylation of the position 2 hydroxy group of 4-diphosphocytidyl-2C-methyl-D-erythritol.</text>
</comment>
<comment type="catalytic activity">
    <reaction evidence="1">
        <text>4-CDP-2-C-methyl-D-erythritol + ATP = 4-CDP-2-C-methyl-D-erythritol 2-phosphate + ADP + H(+)</text>
        <dbReference type="Rhea" id="RHEA:18437"/>
        <dbReference type="ChEBI" id="CHEBI:15378"/>
        <dbReference type="ChEBI" id="CHEBI:30616"/>
        <dbReference type="ChEBI" id="CHEBI:57823"/>
        <dbReference type="ChEBI" id="CHEBI:57919"/>
        <dbReference type="ChEBI" id="CHEBI:456216"/>
        <dbReference type="EC" id="2.7.1.148"/>
    </reaction>
</comment>
<comment type="pathway">
    <text evidence="1">Isoprenoid biosynthesis; isopentenyl diphosphate biosynthesis via DXP pathway; isopentenyl diphosphate from 1-deoxy-D-xylulose 5-phosphate: step 3/6.</text>
</comment>
<comment type="similarity">
    <text evidence="1">Belongs to the GHMP kinase family. IspE subfamily.</text>
</comment>
<dbReference type="EC" id="2.7.1.148" evidence="1"/>
<dbReference type="EMBL" id="AE000511">
    <property type="protein sequence ID" value="AAD08481.1"/>
    <property type="molecule type" value="Genomic_DNA"/>
</dbReference>
<dbReference type="PIR" id="C64700">
    <property type="entry name" value="C64700"/>
</dbReference>
<dbReference type="RefSeq" id="NP_208234.1">
    <property type="nucleotide sequence ID" value="NC_000915.1"/>
</dbReference>
<dbReference type="RefSeq" id="WP_000150052.1">
    <property type="nucleotide sequence ID" value="NC_018939.1"/>
</dbReference>
<dbReference type="SMR" id="O25984"/>
<dbReference type="FunCoup" id="O25984">
    <property type="interactions" value="216"/>
</dbReference>
<dbReference type="STRING" id="85962.HP_1443"/>
<dbReference type="PaxDb" id="85962-C694_07475"/>
<dbReference type="EnsemblBacteria" id="AAD08481">
    <property type="protein sequence ID" value="AAD08481"/>
    <property type="gene ID" value="HP_1443"/>
</dbReference>
<dbReference type="KEGG" id="heo:C694_07475"/>
<dbReference type="KEGG" id="hpy:HP_1443"/>
<dbReference type="PATRIC" id="fig|85962.47.peg.1552"/>
<dbReference type="eggNOG" id="COG1947">
    <property type="taxonomic scope" value="Bacteria"/>
</dbReference>
<dbReference type="InParanoid" id="O25984"/>
<dbReference type="OrthoDB" id="9809438at2"/>
<dbReference type="PhylomeDB" id="O25984"/>
<dbReference type="UniPathway" id="UPA00056">
    <property type="reaction ID" value="UER00094"/>
</dbReference>
<dbReference type="Proteomes" id="UP000000429">
    <property type="component" value="Chromosome"/>
</dbReference>
<dbReference type="GO" id="GO:0050515">
    <property type="term" value="F:4-(cytidine 5'-diphospho)-2-C-methyl-D-erythritol kinase activity"/>
    <property type="evidence" value="ECO:0000318"/>
    <property type="project" value="GO_Central"/>
</dbReference>
<dbReference type="GO" id="GO:0005524">
    <property type="term" value="F:ATP binding"/>
    <property type="evidence" value="ECO:0007669"/>
    <property type="project" value="UniProtKB-UniRule"/>
</dbReference>
<dbReference type="GO" id="GO:0019288">
    <property type="term" value="P:isopentenyl diphosphate biosynthetic process, methylerythritol 4-phosphate pathway"/>
    <property type="evidence" value="ECO:0007669"/>
    <property type="project" value="UniProtKB-UniRule"/>
</dbReference>
<dbReference type="GO" id="GO:0016114">
    <property type="term" value="P:terpenoid biosynthetic process"/>
    <property type="evidence" value="ECO:0007669"/>
    <property type="project" value="InterPro"/>
</dbReference>
<dbReference type="FunFam" id="3.30.230.10:FF:000185">
    <property type="entry name" value="4-diphosphocytidyl-2-C-methyl-D-erythritol kinase"/>
    <property type="match status" value="1"/>
</dbReference>
<dbReference type="Gene3D" id="3.30.230.10">
    <property type="match status" value="1"/>
</dbReference>
<dbReference type="Gene3D" id="3.30.70.890">
    <property type="entry name" value="GHMP kinase, C-terminal domain"/>
    <property type="match status" value="1"/>
</dbReference>
<dbReference type="HAMAP" id="MF_00061">
    <property type="entry name" value="IspE"/>
    <property type="match status" value="1"/>
</dbReference>
<dbReference type="InterPro" id="IPR036554">
    <property type="entry name" value="GHMP_kinase_C_sf"/>
</dbReference>
<dbReference type="InterPro" id="IPR006204">
    <property type="entry name" value="GHMP_kinase_N_dom"/>
</dbReference>
<dbReference type="InterPro" id="IPR004424">
    <property type="entry name" value="IspE"/>
</dbReference>
<dbReference type="InterPro" id="IPR020568">
    <property type="entry name" value="Ribosomal_Su5_D2-typ_SF"/>
</dbReference>
<dbReference type="InterPro" id="IPR014721">
    <property type="entry name" value="Ribsml_uS5_D2-typ_fold_subgr"/>
</dbReference>
<dbReference type="NCBIfam" id="TIGR00154">
    <property type="entry name" value="ispE"/>
    <property type="match status" value="1"/>
</dbReference>
<dbReference type="NCBIfam" id="NF003216">
    <property type="entry name" value="PRK04181.1"/>
    <property type="match status" value="1"/>
</dbReference>
<dbReference type="PANTHER" id="PTHR43527">
    <property type="entry name" value="4-DIPHOSPHOCYTIDYL-2-C-METHYL-D-ERYTHRITOL KINASE, CHLOROPLASTIC"/>
    <property type="match status" value="1"/>
</dbReference>
<dbReference type="PANTHER" id="PTHR43527:SF2">
    <property type="entry name" value="4-DIPHOSPHOCYTIDYL-2-C-METHYL-D-ERYTHRITOL KINASE, CHLOROPLASTIC"/>
    <property type="match status" value="1"/>
</dbReference>
<dbReference type="Pfam" id="PF00288">
    <property type="entry name" value="GHMP_kinases_N"/>
    <property type="match status" value="1"/>
</dbReference>
<dbReference type="PIRSF" id="PIRSF010376">
    <property type="entry name" value="IspE"/>
    <property type="match status" value="1"/>
</dbReference>
<dbReference type="SUPFAM" id="SSF55060">
    <property type="entry name" value="GHMP Kinase, C-terminal domain"/>
    <property type="match status" value="1"/>
</dbReference>
<dbReference type="SUPFAM" id="SSF54211">
    <property type="entry name" value="Ribosomal protein S5 domain 2-like"/>
    <property type="match status" value="1"/>
</dbReference>
<reference key="1">
    <citation type="journal article" date="1997" name="Nature">
        <title>The complete genome sequence of the gastric pathogen Helicobacter pylori.</title>
        <authorList>
            <person name="Tomb J.-F."/>
            <person name="White O."/>
            <person name="Kerlavage A.R."/>
            <person name="Clayton R.A."/>
            <person name="Sutton G.G."/>
            <person name="Fleischmann R.D."/>
            <person name="Ketchum K.A."/>
            <person name="Klenk H.-P."/>
            <person name="Gill S.R."/>
            <person name="Dougherty B.A."/>
            <person name="Nelson K.E."/>
            <person name="Quackenbush J."/>
            <person name="Zhou L."/>
            <person name="Kirkness E.F."/>
            <person name="Peterson S.N."/>
            <person name="Loftus B.J."/>
            <person name="Richardson D.L."/>
            <person name="Dodson R.J."/>
            <person name="Khalak H.G."/>
            <person name="Glodek A."/>
            <person name="McKenney K."/>
            <person name="FitzGerald L.M."/>
            <person name="Lee N."/>
            <person name="Adams M.D."/>
            <person name="Hickey E.K."/>
            <person name="Berg D.E."/>
            <person name="Gocayne J.D."/>
            <person name="Utterback T.R."/>
            <person name="Peterson J.D."/>
            <person name="Kelley J.M."/>
            <person name="Cotton M.D."/>
            <person name="Weidman J.F."/>
            <person name="Fujii C."/>
            <person name="Bowman C."/>
            <person name="Watthey L."/>
            <person name="Wallin E."/>
            <person name="Hayes W.S."/>
            <person name="Borodovsky M."/>
            <person name="Karp P.D."/>
            <person name="Smith H.O."/>
            <person name="Fraser C.M."/>
            <person name="Venter J.C."/>
        </authorList>
    </citation>
    <scope>NUCLEOTIDE SEQUENCE [LARGE SCALE GENOMIC DNA]</scope>
    <source>
        <strain>ATCC 700392 / 26695</strain>
    </source>
</reference>
<evidence type="ECO:0000255" key="1">
    <source>
        <dbReference type="HAMAP-Rule" id="MF_00061"/>
    </source>
</evidence>
<proteinExistence type="inferred from homology"/>
<protein>
    <recommendedName>
        <fullName evidence="1">4-diphosphocytidyl-2-C-methyl-D-erythritol kinase</fullName>
        <shortName evidence="1">CMK</shortName>
        <ecNumber evidence="1">2.7.1.148</ecNumber>
    </recommendedName>
    <alternativeName>
        <fullName evidence="1">4-(cytidine-5'-diphospho)-2-C-methyl-D-erythritol kinase</fullName>
    </alternativeName>
</protein>
<accession>O25984</accession>
<feature type="chain" id="PRO_0000189224" description="4-diphosphocytidyl-2-C-methyl-D-erythritol kinase">
    <location>
        <begin position="1"/>
        <end position="268"/>
    </location>
</feature>
<feature type="active site" evidence="1">
    <location>
        <position position="10"/>
    </location>
</feature>
<feature type="active site" evidence="1">
    <location>
        <position position="143"/>
    </location>
</feature>
<feature type="binding site" evidence="1">
    <location>
        <begin position="101"/>
        <end position="111"/>
    </location>
    <ligand>
        <name>ATP</name>
        <dbReference type="ChEBI" id="CHEBI:30616"/>
    </ligand>
</feature>
<keyword id="KW-0067">ATP-binding</keyword>
<keyword id="KW-0414">Isoprene biosynthesis</keyword>
<keyword id="KW-0418">Kinase</keyword>
<keyword id="KW-0547">Nucleotide-binding</keyword>
<keyword id="KW-1185">Reference proteome</keyword>
<keyword id="KW-0808">Transferase</keyword>
<gene>
    <name evidence="1" type="primary">ispE</name>
    <name type="ordered locus">HP_1443</name>
</gene>
<sequence>MTHVFEVYPKVNIFLKILHKEGAYHKLISRMCLVKDKLKDIISVKSALSFSLKGDFDCPLEENSLFKALQILKNFLKSKNFSHSVIKSLDTLAIEVEKNIPTQAGLGGGSTDAGGLLYHLNQIFDWRLSLEELYSMGSLVGADTNFFISQYKSTNATSYGEVIENFEEEPLENRLEIYAPNHVFCSTKAVYQAYKPETCFSQAKEWLKKPSLECLKTYDRNGLNDLLKPALLTNQALKDIESELGKEWFFSGSGSAFFRLKPMQKGGE</sequence>